<accession>Q2SRP7</accession>
<proteinExistence type="inferred from homology"/>
<keyword id="KW-0963">Cytoplasm</keyword>
<keyword id="KW-0238">DNA-binding</keyword>
<keyword id="KW-0804">Transcription</keyword>
<keyword id="KW-0805">Transcription regulation</keyword>
<reference key="1">
    <citation type="submission" date="2005-09" db="EMBL/GenBank/DDBJ databases">
        <authorList>
            <person name="Glass J.I."/>
            <person name="Lartigue C."/>
            <person name="Pfannkoch C."/>
            <person name="Baden-Tillson H."/>
            <person name="Smith H.O."/>
            <person name="Venter J.C."/>
            <person name="Roske K."/>
            <person name="Wise K.S."/>
            <person name="Calcutt M.J."/>
            <person name="Nelson W.C."/>
            <person name="Nierman W.C."/>
        </authorList>
    </citation>
    <scope>NUCLEOTIDE SEQUENCE [LARGE SCALE GENOMIC DNA]</scope>
    <source>
        <strain>California kid / ATCC 27343 / NCTC 10154</strain>
    </source>
</reference>
<sequence length="237" mass="26380">MGRAHEVRAASMAKTAAKKSAANGRAAKEIYMAAKQGGIDPNSNLALRSVIDKAKANQIPRDVIERAIKRAAGGDAENYVSNRYEGIGPSNVAILVDTLTSNVNRAAAMIREVFNKNKGNPDGKVNFLFEDVAMFAFKNKKEDEVLEALMSDEVEINDLICEDETIIIYAPFKAYNSVKHSLDKLNIDEYLISEIRAIPIDKRIEIKDKQTKLQLQTLLDKLDELEDVQNVYHNAEL</sequence>
<feature type="chain" id="PRO_0000257081" description="Probable transcriptional regulatory protein MCAP_0598">
    <location>
        <begin position="1"/>
        <end position="237"/>
    </location>
</feature>
<comment type="subcellular location">
    <subcellularLocation>
        <location evidence="1">Cytoplasm</location>
    </subcellularLocation>
</comment>
<comment type="similarity">
    <text evidence="1">Belongs to the TACO1 family.</text>
</comment>
<evidence type="ECO:0000255" key="1">
    <source>
        <dbReference type="HAMAP-Rule" id="MF_00693"/>
    </source>
</evidence>
<protein>
    <recommendedName>
        <fullName evidence="1">Probable transcriptional regulatory protein MCAP_0598</fullName>
    </recommendedName>
</protein>
<name>Y598_MYCCT</name>
<dbReference type="EMBL" id="CP000123">
    <property type="protein sequence ID" value="ABC01187.1"/>
    <property type="molecule type" value="Genomic_DNA"/>
</dbReference>
<dbReference type="RefSeq" id="WP_011387462.1">
    <property type="nucleotide sequence ID" value="NC_007633.1"/>
</dbReference>
<dbReference type="SMR" id="Q2SRP7"/>
<dbReference type="GeneID" id="23778446"/>
<dbReference type="KEGG" id="mcp:MCAP_0598"/>
<dbReference type="HOGENOM" id="CLU_062974_2_0_14"/>
<dbReference type="PhylomeDB" id="Q2SRP7"/>
<dbReference type="Proteomes" id="UP000001928">
    <property type="component" value="Chromosome"/>
</dbReference>
<dbReference type="GO" id="GO:0005829">
    <property type="term" value="C:cytosol"/>
    <property type="evidence" value="ECO:0007669"/>
    <property type="project" value="TreeGrafter"/>
</dbReference>
<dbReference type="GO" id="GO:0003677">
    <property type="term" value="F:DNA binding"/>
    <property type="evidence" value="ECO:0007669"/>
    <property type="project" value="UniProtKB-UniRule"/>
</dbReference>
<dbReference type="GO" id="GO:0006355">
    <property type="term" value="P:regulation of DNA-templated transcription"/>
    <property type="evidence" value="ECO:0007669"/>
    <property type="project" value="UniProtKB-UniRule"/>
</dbReference>
<dbReference type="Gene3D" id="1.10.10.200">
    <property type="match status" value="1"/>
</dbReference>
<dbReference type="Gene3D" id="3.30.70.980">
    <property type="match status" value="2"/>
</dbReference>
<dbReference type="HAMAP" id="MF_00693">
    <property type="entry name" value="Transcrip_reg_TACO1"/>
    <property type="match status" value="1"/>
</dbReference>
<dbReference type="InterPro" id="IPR017856">
    <property type="entry name" value="Integrase-like_N"/>
</dbReference>
<dbReference type="InterPro" id="IPR048300">
    <property type="entry name" value="TACO1_YebC-like_2nd/3rd_dom"/>
</dbReference>
<dbReference type="InterPro" id="IPR049083">
    <property type="entry name" value="TACO1_YebC_N"/>
</dbReference>
<dbReference type="InterPro" id="IPR002876">
    <property type="entry name" value="Transcrip_reg_TACO1-like"/>
</dbReference>
<dbReference type="InterPro" id="IPR026564">
    <property type="entry name" value="Transcrip_reg_TACO1-like_dom3"/>
</dbReference>
<dbReference type="InterPro" id="IPR029072">
    <property type="entry name" value="YebC-like"/>
</dbReference>
<dbReference type="NCBIfam" id="NF009044">
    <property type="entry name" value="PRK12378.1"/>
    <property type="match status" value="1"/>
</dbReference>
<dbReference type="PANTHER" id="PTHR12532">
    <property type="entry name" value="TRANSLATIONAL ACTIVATOR OF CYTOCHROME C OXIDASE 1"/>
    <property type="match status" value="1"/>
</dbReference>
<dbReference type="PANTHER" id="PTHR12532:SF0">
    <property type="entry name" value="TRANSLATIONAL ACTIVATOR OF CYTOCHROME C OXIDASE 1"/>
    <property type="match status" value="1"/>
</dbReference>
<dbReference type="Pfam" id="PF20772">
    <property type="entry name" value="TACO1_YebC_N"/>
    <property type="match status" value="1"/>
</dbReference>
<dbReference type="Pfam" id="PF01709">
    <property type="entry name" value="Transcrip_reg"/>
    <property type="match status" value="1"/>
</dbReference>
<dbReference type="SUPFAM" id="SSF75625">
    <property type="entry name" value="YebC-like"/>
    <property type="match status" value="1"/>
</dbReference>
<organism>
    <name type="scientific">Mycoplasma capricolum subsp. capricolum (strain California kid / ATCC 27343 / NCTC 10154)</name>
    <dbReference type="NCBI Taxonomy" id="340047"/>
    <lineage>
        <taxon>Bacteria</taxon>
        <taxon>Bacillati</taxon>
        <taxon>Mycoplasmatota</taxon>
        <taxon>Mollicutes</taxon>
        <taxon>Mycoplasmataceae</taxon>
        <taxon>Mycoplasma</taxon>
    </lineage>
</organism>
<gene>
    <name type="ordered locus">MCAP_0598</name>
</gene>